<protein>
    <recommendedName>
        <fullName evidence="1">D-ribose pyranase</fullName>
        <ecNumber evidence="1">5.4.99.62</ecNumber>
    </recommendedName>
</protein>
<dbReference type="EC" id="5.4.99.62" evidence="1"/>
<dbReference type="EMBL" id="AE015451">
    <property type="protein sequence ID" value="AAN68071.1"/>
    <property type="molecule type" value="Genomic_DNA"/>
</dbReference>
<dbReference type="RefSeq" id="NP_744607.1">
    <property type="nucleotide sequence ID" value="NC_002947.4"/>
</dbReference>
<dbReference type="RefSeq" id="WP_003250646.1">
    <property type="nucleotide sequence ID" value="NZ_CP169744.1"/>
</dbReference>
<dbReference type="SMR" id="Q88K33"/>
<dbReference type="STRING" id="160488.PP_2459"/>
<dbReference type="PaxDb" id="160488-PP_2459"/>
<dbReference type="GeneID" id="83681020"/>
<dbReference type="KEGG" id="ppu:PP_2459"/>
<dbReference type="PATRIC" id="fig|160488.4.peg.2605"/>
<dbReference type="eggNOG" id="COG1869">
    <property type="taxonomic scope" value="Bacteria"/>
</dbReference>
<dbReference type="HOGENOM" id="CLU_135498_0_0_6"/>
<dbReference type="OrthoDB" id="9805009at2"/>
<dbReference type="PhylomeDB" id="Q88K33"/>
<dbReference type="BioCyc" id="PPUT160488:G1G01-2629-MONOMER"/>
<dbReference type="UniPathway" id="UPA00916">
    <property type="reaction ID" value="UER00888"/>
</dbReference>
<dbReference type="Proteomes" id="UP000000556">
    <property type="component" value="Chromosome"/>
</dbReference>
<dbReference type="GO" id="GO:0005829">
    <property type="term" value="C:cytosol"/>
    <property type="evidence" value="ECO:0007669"/>
    <property type="project" value="TreeGrafter"/>
</dbReference>
<dbReference type="GO" id="GO:0062193">
    <property type="term" value="F:D-ribose pyranase activity"/>
    <property type="evidence" value="ECO:0007669"/>
    <property type="project" value="UniProtKB-EC"/>
</dbReference>
<dbReference type="GO" id="GO:0016872">
    <property type="term" value="F:intramolecular lyase activity"/>
    <property type="evidence" value="ECO:0007669"/>
    <property type="project" value="UniProtKB-UniRule"/>
</dbReference>
<dbReference type="GO" id="GO:0048029">
    <property type="term" value="F:monosaccharide binding"/>
    <property type="evidence" value="ECO:0007669"/>
    <property type="project" value="InterPro"/>
</dbReference>
<dbReference type="GO" id="GO:0019303">
    <property type="term" value="P:D-ribose catabolic process"/>
    <property type="evidence" value="ECO:0007669"/>
    <property type="project" value="UniProtKB-UniRule"/>
</dbReference>
<dbReference type="FunFam" id="3.40.1650.10:FF:000004">
    <property type="entry name" value="D-ribose pyranase"/>
    <property type="match status" value="1"/>
</dbReference>
<dbReference type="Gene3D" id="3.40.1650.10">
    <property type="entry name" value="RbsD-like domain"/>
    <property type="match status" value="1"/>
</dbReference>
<dbReference type="HAMAP" id="MF_01661">
    <property type="entry name" value="D_rib_pyranase"/>
    <property type="match status" value="1"/>
</dbReference>
<dbReference type="InterPro" id="IPR023064">
    <property type="entry name" value="D-ribose_pyranase"/>
</dbReference>
<dbReference type="InterPro" id="IPR023750">
    <property type="entry name" value="RbsD-like_sf"/>
</dbReference>
<dbReference type="InterPro" id="IPR007721">
    <property type="entry name" value="RbsD_FucU"/>
</dbReference>
<dbReference type="NCBIfam" id="NF008761">
    <property type="entry name" value="PRK11797.1"/>
    <property type="match status" value="1"/>
</dbReference>
<dbReference type="PANTHER" id="PTHR37831">
    <property type="entry name" value="D-RIBOSE PYRANASE"/>
    <property type="match status" value="1"/>
</dbReference>
<dbReference type="PANTHER" id="PTHR37831:SF1">
    <property type="entry name" value="D-RIBOSE PYRANASE"/>
    <property type="match status" value="1"/>
</dbReference>
<dbReference type="Pfam" id="PF05025">
    <property type="entry name" value="RbsD_FucU"/>
    <property type="match status" value="1"/>
</dbReference>
<dbReference type="SUPFAM" id="SSF102546">
    <property type="entry name" value="RbsD-like"/>
    <property type="match status" value="1"/>
</dbReference>
<gene>
    <name evidence="1" type="primary">rbsD</name>
    <name type="ordered locus">PP_2459</name>
</gene>
<keyword id="KW-0119">Carbohydrate metabolism</keyword>
<keyword id="KW-0963">Cytoplasm</keyword>
<keyword id="KW-0413">Isomerase</keyword>
<keyword id="KW-1185">Reference proteome</keyword>
<reference key="1">
    <citation type="journal article" date="2002" name="Environ. Microbiol.">
        <title>Complete genome sequence and comparative analysis of the metabolically versatile Pseudomonas putida KT2440.</title>
        <authorList>
            <person name="Nelson K.E."/>
            <person name="Weinel C."/>
            <person name="Paulsen I.T."/>
            <person name="Dodson R.J."/>
            <person name="Hilbert H."/>
            <person name="Martins dos Santos V.A.P."/>
            <person name="Fouts D.E."/>
            <person name="Gill S.R."/>
            <person name="Pop M."/>
            <person name="Holmes M."/>
            <person name="Brinkac L.M."/>
            <person name="Beanan M.J."/>
            <person name="DeBoy R.T."/>
            <person name="Daugherty S.C."/>
            <person name="Kolonay J.F."/>
            <person name="Madupu R."/>
            <person name="Nelson W.C."/>
            <person name="White O."/>
            <person name="Peterson J.D."/>
            <person name="Khouri H.M."/>
            <person name="Hance I."/>
            <person name="Chris Lee P."/>
            <person name="Holtzapple E.K."/>
            <person name="Scanlan D."/>
            <person name="Tran K."/>
            <person name="Moazzez A."/>
            <person name="Utterback T.R."/>
            <person name="Rizzo M."/>
            <person name="Lee K."/>
            <person name="Kosack D."/>
            <person name="Moestl D."/>
            <person name="Wedler H."/>
            <person name="Lauber J."/>
            <person name="Stjepandic D."/>
            <person name="Hoheisel J."/>
            <person name="Straetz M."/>
            <person name="Heim S."/>
            <person name="Kiewitz C."/>
            <person name="Eisen J.A."/>
            <person name="Timmis K.N."/>
            <person name="Duesterhoeft A."/>
            <person name="Tuemmler B."/>
            <person name="Fraser C.M."/>
        </authorList>
    </citation>
    <scope>NUCLEOTIDE SEQUENCE [LARGE SCALE GENOMIC DNA]</scope>
    <source>
        <strain>ATCC 47054 / DSM 6125 / CFBP 8728 / NCIMB 11950 / KT2440</strain>
    </source>
</reference>
<sequence>MKKTPLLNVALSRVIAGMGHGDILVIGDAGLPVPPGVELIDLAITPGLPDFASVLRVVLSELQVERHVLAEEMQKVVPPALVEIERLKGKLGKREWLTHEDFKVLSRSARAVVRTGECQPYSNIALISGVTF</sequence>
<proteinExistence type="inferred from homology"/>
<evidence type="ECO:0000255" key="1">
    <source>
        <dbReference type="HAMAP-Rule" id="MF_01661"/>
    </source>
</evidence>
<accession>Q88K33</accession>
<name>RBSD_PSEPK</name>
<comment type="function">
    <text evidence="1">Catalyzes the interconversion of beta-pyran and beta-furan forms of D-ribose.</text>
</comment>
<comment type="catalytic activity">
    <reaction evidence="1">
        <text>beta-D-ribopyranose = beta-D-ribofuranose</text>
        <dbReference type="Rhea" id="RHEA:25432"/>
        <dbReference type="ChEBI" id="CHEBI:27476"/>
        <dbReference type="ChEBI" id="CHEBI:47002"/>
        <dbReference type="EC" id="5.4.99.62"/>
    </reaction>
</comment>
<comment type="pathway">
    <text evidence="1">Carbohydrate metabolism; D-ribose degradation; D-ribose 5-phosphate from beta-D-ribopyranose: step 1/2.</text>
</comment>
<comment type="subunit">
    <text evidence="1">Homodecamer.</text>
</comment>
<comment type="subcellular location">
    <subcellularLocation>
        <location evidence="1">Cytoplasm</location>
    </subcellularLocation>
</comment>
<comment type="similarity">
    <text evidence="1">Belongs to the RbsD / FucU family. RbsD subfamily.</text>
</comment>
<organism>
    <name type="scientific">Pseudomonas putida (strain ATCC 47054 / DSM 6125 / CFBP 8728 / NCIMB 11950 / KT2440)</name>
    <dbReference type="NCBI Taxonomy" id="160488"/>
    <lineage>
        <taxon>Bacteria</taxon>
        <taxon>Pseudomonadati</taxon>
        <taxon>Pseudomonadota</taxon>
        <taxon>Gammaproteobacteria</taxon>
        <taxon>Pseudomonadales</taxon>
        <taxon>Pseudomonadaceae</taxon>
        <taxon>Pseudomonas</taxon>
    </lineage>
</organism>
<feature type="chain" id="PRO_0000346239" description="D-ribose pyranase">
    <location>
        <begin position="1"/>
        <end position="132"/>
    </location>
</feature>
<feature type="active site" description="Proton donor" evidence="1">
    <location>
        <position position="20"/>
    </location>
</feature>
<feature type="binding site" evidence="1">
    <location>
        <position position="28"/>
    </location>
    <ligand>
        <name>substrate</name>
    </ligand>
</feature>
<feature type="binding site" evidence="1">
    <location>
        <position position="99"/>
    </location>
    <ligand>
        <name>substrate</name>
    </ligand>
</feature>
<feature type="binding site" evidence="1">
    <location>
        <begin position="121"/>
        <end position="123"/>
    </location>
    <ligand>
        <name>substrate</name>
    </ligand>
</feature>